<comment type="function">
    <text evidence="1">One of the primary rRNA binding proteins. Required for association of the 30S and 50S subunits to form the 70S ribosome, for tRNA binding and peptide bond formation. It has been suggested to have peptidyltransferase activity; this is somewhat controversial. Makes several contacts with the 16S rRNA in the 70S ribosome.</text>
</comment>
<comment type="subunit">
    <text evidence="1">Part of the 50S ribosomal subunit. Forms a bridge to the 30S subunit in the 70S ribosome.</text>
</comment>
<comment type="similarity">
    <text evidence="1">Belongs to the universal ribosomal protein uL2 family.</text>
</comment>
<evidence type="ECO:0000255" key="1">
    <source>
        <dbReference type="HAMAP-Rule" id="MF_01320"/>
    </source>
</evidence>
<evidence type="ECO:0000256" key="2">
    <source>
        <dbReference type="SAM" id="MobiDB-lite"/>
    </source>
</evidence>
<evidence type="ECO:0000305" key="3"/>
<protein>
    <recommendedName>
        <fullName evidence="1">Large ribosomal subunit protein uL2</fullName>
    </recommendedName>
    <alternativeName>
        <fullName evidence="3">50S ribosomal protein L2</fullName>
    </alternativeName>
</protein>
<gene>
    <name evidence="1" type="primary">rplB</name>
    <name type="ordered locus">Saro_1252</name>
</gene>
<dbReference type="EMBL" id="CP000248">
    <property type="protein sequence ID" value="ABD25696.1"/>
    <property type="molecule type" value="Genomic_DNA"/>
</dbReference>
<dbReference type="RefSeq" id="WP_011444910.1">
    <property type="nucleotide sequence ID" value="NC_007794.1"/>
</dbReference>
<dbReference type="SMR" id="Q2G8X7"/>
<dbReference type="STRING" id="279238.Saro_1252"/>
<dbReference type="KEGG" id="nar:Saro_1252"/>
<dbReference type="eggNOG" id="COG0090">
    <property type="taxonomic scope" value="Bacteria"/>
</dbReference>
<dbReference type="HOGENOM" id="CLU_036235_2_1_5"/>
<dbReference type="Proteomes" id="UP000009134">
    <property type="component" value="Chromosome"/>
</dbReference>
<dbReference type="GO" id="GO:0015934">
    <property type="term" value="C:large ribosomal subunit"/>
    <property type="evidence" value="ECO:0007669"/>
    <property type="project" value="InterPro"/>
</dbReference>
<dbReference type="GO" id="GO:0019843">
    <property type="term" value="F:rRNA binding"/>
    <property type="evidence" value="ECO:0007669"/>
    <property type="project" value="UniProtKB-UniRule"/>
</dbReference>
<dbReference type="GO" id="GO:0003735">
    <property type="term" value="F:structural constituent of ribosome"/>
    <property type="evidence" value="ECO:0007669"/>
    <property type="project" value="InterPro"/>
</dbReference>
<dbReference type="GO" id="GO:0016740">
    <property type="term" value="F:transferase activity"/>
    <property type="evidence" value="ECO:0007669"/>
    <property type="project" value="InterPro"/>
</dbReference>
<dbReference type="GO" id="GO:0002181">
    <property type="term" value="P:cytoplasmic translation"/>
    <property type="evidence" value="ECO:0007669"/>
    <property type="project" value="TreeGrafter"/>
</dbReference>
<dbReference type="FunFam" id="2.30.30.30:FF:000001">
    <property type="entry name" value="50S ribosomal protein L2"/>
    <property type="match status" value="1"/>
</dbReference>
<dbReference type="FunFam" id="4.10.950.10:FF:000001">
    <property type="entry name" value="50S ribosomal protein L2"/>
    <property type="match status" value="1"/>
</dbReference>
<dbReference type="Gene3D" id="2.30.30.30">
    <property type="match status" value="1"/>
</dbReference>
<dbReference type="Gene3D" id="2.40.50.140">
    <property type="entry name" value="Nucleic acid-binding proteins"/>
    <property type="match status" value="1"/>
</dbReference>
<dbReference type="Gene3D" id="4.10.950.10">
    <property type="entry name" value="Ribosomal protein L2, domain 3"/>
    <property type="match status" value="1"/>
</dbReference>
<dbReference type="HAMAP" id="MF_01320_B">
    <property type="entry name" value="Ribosomal_uL2_B"/>
    <property type="match status" value="1"/>
</dbReference>
<dbReference type="InterPro" id="IPR012340">
    <property type="entry name" value="NA-bd_OB-fold"/>
</dbReference>
<dbReference type="InterPro" id="IPR014722">
    <property type="entry name" value="Rib_uL2_dom2"/>
</dbReference>
<dbReference type="InterPro" id="IPR002171">
    <property type="entry name" value="Ribosomal_uL2"/>
</dbReference>
<dbReference type="InterPro" id="IPR005880">
    <property type="entry name" value="Ribosomal_uL2_bac/org-type"/>
</dbReference>
<dbReference type="InterPro" id="IPR022669">
    <property type="entry name" value="Ribosomal_uL2_C"/>
</dbReference>
<dbReference type="InterPro" id="IPR022671">
    <property type="entry name" value="Ribosomal_uL2_CS"/>
</dbReference>
<dbReference type="InterPro" id="IPR014726">
    <property type="entry name" value="Ribosomal_uL2_dom3"/>
</dbReference>
<dbReference type="InterPro" id="IPR022666">
    <property type="entry name" value="Ribosomal_uL2_RNA-bd_dom"/>
</dbReference>
<dbReference type="InterPro" id="IPR008991">
    <property type="entry name" value="Translation_prot_SH3-like_sf"/>
</dbReference>
<dbReference type="NCBIfam" id="TIGR01171">
    <property type="entry name" value="rplB_bact"/>
    <property type="match status" value="1"/>
</dbReference>
<dbReference type="PANTHER" id="PTHR13691:SF5">
    <property type="entry name" value="LARGE RIBOSOMAL SUBUNIT PROTEIN UL2M"/>
    <property type="match status" value="1"/>
</dbReference>
<dbReference type="PANTHER" id="PTHR13691">
    <property type="entry name" value="RIBOSOMAL PROTEIN L2"/>
    <property type="match status" value="1"/>
</dbReference>
<dbReference type="Pfam" id="PF00181">
    <property type="entry name" value="Ribosomal_L2"/>
    <property type="match status" value="1"/>
</dbReference>
<dbReference type="Pfam" id="PF03947">
    <property type="entry name" value="Ribosomal_L2_C"/>
    <property type="match status" value="1"/>
</dbReference>
<dbReference type="PIRSF" id="PIRSF002158">
    <property type="entry name" value="Ribosomal_L2"/>
    <property type="match status" value="1"/>
</dbReference>
<dbReference type="SMART" id="SM01383">
    <property type="entry name" value="Ribosomal_L2"/>
    <property type="match status" value="1"/>
</dbReference>
<dbReference type="SMART" id="SM01382">
    <property type="entry name" value="Ribosomal_L2_C"/>
    <property type="match status" value="1"/>
</dbReference>
<dbReference type="SUPFAM" id="SSF50249">
    <property type="entry name" value="Nucleic acid-binding proteins"/>
    <property type="match status" value="1"/>
</dbReference>
<dbReference type="SUPFAM" id="SSF50104">
    <property type="entry name" value="Translation proteins SH3-like domain"/>
    <property type="match status" value="1"/>
</dbReference>
<dbReference type="PROSITE" id="PS00467">
    <property type="entry name" value="RIBOSOMAL_L2"/>
    <property type="match status" value="1"/>
</dbReference>
<reference key="1">
    <citation type="submission" date="2006-01" db="EMBL/GenBank/DDBJ databases">
        <title>Complete sequence of Novosphingobium aromaticivorans DSM 12444.</title>
        <authorList>
            <consortium name="US DOE Joint Genome Institute"/>
            <person name="Copeland A."/>
            <person name="Lucas S."/>
            <person name="Lapidus A."/>
            <person name="Barry K."/>
            <person name="Detter J.C."/>
            <person name="Glavina T."/>
            <person name="Hammon N."/>
            <person name="Israni S."/>
            <person name="Pitluck S."/>
            <person name="Chain P."/>
            <person name="Malfatti S."/>
            <person name="Shin M."/>
            <person name="Vergez L."/>
            <person name="Schmutz J."/>
            <person name="Larimer F."/>
            <person name="Land M."/>
            <person name="Kyrpides N."/>
            <person name="Ivanova N."/>
            <person name="Fredrickson J."/>
            <person name="Balkwill D."/>
            <person name="Romine M.F."/>
            <person name="Richardson P."/>
        </authorList>
    </citation>
    <scope>NUCLEOTIDE SEQUENCE [LARGE SCALE GENOMIC DNA]</scope>
    <source>
        <strain>ATCC 700278 / DSM 12444 / CCUG 56034 / CIP 105152 / NBRC 16084 / F199</strain>
    </source>
</reference>
<name>RL2_NOVAD</name>
<accession>Q2G8X7</accession>
<sequence length="278" mass="30508">MALKSYNPTSPARRGLVLVDKSALWKGKPVKALTEGKRKTGGRNNKGHVTSRGIAGGHKQKYRYVDFKRRKWDMPATVERLEYDPNRTAFIALVKYEDGELAYILAPQRLGVGDQVIAGEKTDVKPGNAMLLSQMPVGTIIHNVEMKPGKGGQIARSAGTYVQLVGRDRGMVIVRLNSGEQRYLRGDCMGTVGAVSNPDNGNQNLAKAGRNRWLGKRPLTRGVAKNPVDHPHGGGEGRTSGGRHPVTPWGKPTKGARTRHNKATDKMIIRSRHAKKKR</sequence>
<proteinExistence type="inferred from homology"/>
<feature type="chain" id="PRO_0000237219" description="Large ribosomal subunit protein uL2">
    <location>
        <begin position="1"/>
        <end position="278"/>
    </location>
</feature>
<feature type="region of interest" description="Disordered" evidence="2">
    <location>
        <begin position="33"/>
        <end position="53"/>
    </location>
</feature>
<feature type="region of interest" description="Disordered" evidence="2">
    <location>
        <begin position="221"/>
        <end position="278"/>
    </location>
</feature>
<feature type="compositionally biased region" description="Basic residues" evidence="2">
    <location>
        <begin position="269"/>
        <end position="278"/>
    </location>
</feature>
<keyword id="KW-1185">Reference proteome</keyword>
<keyword id="KW-0687">Ribonucleoprotein</keyword>
<keyword id="KW-0689">Ribosomal protein</keyword>
<keyword id="KW-0694">RNA-binding</keyword>
<keyword id="KW-0699">rRNA-binding</keyword>
<organism>
    <name type="scientific">Novosphingobium aromaticivorans (strain ATCC 700278 / DSM 12444 / CCUG 56034 / CIP 105152 / NBRC 16084 / F199)</name>
    <dbReference type="NCBI Taxonomy" id="279238"/>
    <lineage>
        <taxon>Bacteria</taxon>
        <taxon>Pseudomonadati</taxon>
        <taxon>Pseudomonadota</taxon>
        <taxon>Alphaproteobacteria</taxon>
        <taxon>Sphingomonadales</taxon>
        <taxon>Sphingomonadaceae</taxon>
        <taxon>Novosphingobium</taxon>
    </lineage>
</organism>